<dbReference type="EC" id="2.8.2.-" evidence="2"/>
<dbReference type="EMBL" id="CR858486">
    <property type="protein sequence ID" value="CAH90714.1"/>
    <property type="molecule type" value="mRNA"/>
</dbReference>
<dbReference type="RefSeq" id="NP_001125396.1">
    <property type="nucleotide sequence ID" value="NM_001131924.1"/>
</dbReference>
<dbReference type="RefSeq" id="XP_024097666.1">
    <property type="nucleotide sequence ID" value="XM_024241898.3"/>
</dbReference>
<dbReference type="RefSeq" id="XP_024097667.1">
    <property type="nucleotide sequence ID" value="XM_024241899.3"/>
</dbReference>
<dbReference type="RefSeq" id="XP_024097668.1">
    <property type="nucleotide sequence ID" value="XM_024241900.3"/>
</dbReference>
<dbReference type="RefSeq" id="XP_054401722.1">
    <property type="nucleotide sequence ID" value="XM_054545747.1"/>
</dbReference>
<dbReference type="FunCoup" id="Q5RBZ6">
    <property type="interactions" value="700"/>
</dbReference>
<dbReference type="STRING" id="9601.ENSPPYP00000013489"/>
<dbReference type="GlyCosmos" id="Q5RBZ6">
    <property type="glycosylation" value="3 sites, No reported glycans"/>
</dbReference>
<dbReference type="Ensembl" id="ENSPPYT00000014038.3">
    <property type="protein sequence ID" value="ENSPPYP00000013489.2"/>
    <property type="gene ID" value="ENSPPYG00000012098.3"/>
</dbReference>
<dbReference type="GeneID" id="100172301"/>
<dbReference type="KEGG" id="pon:100172301"/>
<dbReference type="CTD" id="9486"/>
<dbReference type="eggNOG" id="KOG4651">
    <property type="taxonomic scope" value="Eukaryota"/>
</dbReference>
<dbReference type="GeneTree" id="ENSGT00940000157128"/>
<dbReference type="HOGENOM" id="CLU_043398_2_0_1"/>
<dbReference type="InParanoid" id="Q5RBZ6"/>
<dbReference type="OMA" id="HWPEEFQ"/>
<dbReference type="OrthoDB" id="2019940at2759"/>
<dbReference type="TreeFam" id="TF325581"/>
<dbReference type="UniPathway" id="UPA00353"/>
<dbReference type="Proteomes" id="UP000001595">
    <property type="component" value="Chromosome 2A"/>
</dbReference>
<dbReference type="GO" id="GO:0000139">
    <property type="term" value="C:Golgi membrane"/>
    <property type="evidence" value="ECO:0000250"/>
    <property type="project" value="UniProtKB"/>
</dbReference>
<dbReference type="GO" id="GO:0008146">
    <property type="term" value="F:sulfotransferase activity"/>
    <property type="evidence" value="ECO:0007669"/>
    <property type="project" value="Ensembl"/>
</dbReference>
<dbReference type="GO" id="GO:0008209">
    <property type="term" value="P:androgen metabolic process"/>
    <property type="evidence" value="ECO:0007669"/>
    <property type="project" value="Ensembl"/>
</dbReference>
<dbReference type="GO" id="GO:0016051">
    <property type="term" value="P:carbohydrate biosynthetic process"/>
    <property type="evidence" value="ECO:0007669"/>
    <property type="project" value="InterPro"/>
</dbReference>
<dbReference type="GO" id="GO:0008210">
    <property type="term" value="P:estrogen metabolic process"/>
    <property type="evidence" value="ECO:0007669"/>
    <property type="project" value="Ensembl"/>
</dbReference>
<dbReference type="GO" id="GO:0007612">
    <property type="term" value="P:learning"/>
    <property type="evidence" value="ECO:0007669"/>
    <property type="project" value="Ensembl"/>
</dbReference>
<dbReference type="GO" id="GO:0007616">
    <property type="term" value="P:long-term memory"/>
    <property type="evidence" value="ECO:0007669"/>
    <property type="project" value="Ensembl"/>
</dbReference>
<dbReference type="GO" id="GO:0030166">
    <property type="term" value="P:proteoglycan biosynthetic process"/>
    <property type="evidence" value="ECO:0007669"/>
    <property type="project" value="TreeGrafter"/>
</dbReference>
<dbReference type="InterPro" id="IPR018011">
    <property type="entry name" value="Carb_sulfotrans_8-10"/>
</dbReference>
<dbReference type="InterPro" id="IPR005331">
    <property type="entry name" value="Sulfotransferase"/>
</dbReference>
<dbReference type="PANTHER" id="PTHR12137">
    <property type="entry name" value="CARBOHYDRATE SULFOTRANSFERASE"/>
    <property type="match status" value="1"/>
</dbReference>
<dbReference type="PANTHER" id="PTHR12137:SF2">
    <property type="entry name" value="CARBOHYDRATE SULFOTRANSFERASE 10"/>
    <property type="match status" value="1"/>
</dbReference>
<dbReference type="Pfam" id="PF03567">
    <property type="entry name" value="Sulfotransfer_2"/>
    <property type="match status" value="1"/>
</dbReference>
<feature type="chain" id="PRO_0000189659" description="Carbohydrate sulfotransferase 10">
    <location>
        <begin position="1"/>
        <end position="356"/>
    </location>
</feature>
<feature type="topological domain" description="Cytoplasmic" evidence="4">
    <location>
        <begin position="1"/>
        <end position="6"/>
    </location>
</feature>
<feature type="transmembrane region" description="Helical; Signal-anchor for type II membrane protein" evidence="4">
    <location>
        <begin position="7"/>
        <end position="27"/>
    </location>
</feature>
<feature type="topological domain" description="Lumenal" evidence="4">
    <location>
        <begin position="28"/>
        <end position="356"/>
    </location>
</feature>
<feature type="binding site" evidence="1">
    <location>
        <begin position="127"/>
        <end position="133"/>
    </location>
    <ligand>
        <name>3'-phosphoadenylyl sulfate</name>
        <dbReference type="ChEBI" id="CHEBI:58339"/>
    </ligand>
</feature>
<feature type="binding site" evidence="1">
    <location>
        <begin position="189"/>
        <end position="197"/>
    </location>
    <ligand>
        <name>3'-phosphoadenylyl sulfate</name>
        <dbReference type="ChEBI" id="CHEBI:58339"/>
    </ligand>
</feature>
<feature type="glycosylation site" description="N-linked (GlcNAc...) asparagine" evidence="4">
    <location>
        <position position="99"/>
    </location>
</feature>
<feature type="glycosylation site" description="N-linked (GlcNAc...) asparagine" evidence="4">
    <location>
        <position position="228"/>
    </location>
</feature>
<feature type="glycosylation site" description="N-linked (GlcNAc...) asparagine" evidence="4">
    <location>
        <position position="316"/>
    </location>
</feature>
<name>CHSTA_PONAB</name>
<reference key="1">
    <citation type="submission" date="2004-11" db="EMBL/GenBank/DDBJ databases">
        <authorList>
            <consortium name="The German cDNA consortium"/>
        </authorList>
    </citation>
    <scope>NUCLEOTIDE SEQUENCE [LARGE SCALE MRNA]</scope>
    <source>
        <tissue>Heart</tissue>
    </source>
</reference>
<keyword id="KW-0119">Carbohydrate metabolism</keyword>
<keyword id="KW-0325">Glycoprotein</keyword>
<keyword id="KW-0333">Golgi apparatus</keyword>
<keyword id="KW-0443">Lipid metabolism</keyword>
<keyword id="KW-0472">Membrane</keyword>
<keyword id="KW-1185">Reference proteome</keyword>
<keyword id="KW-0735">Signal-anchor</keyword>
<keyword id="KW-0753">Steroid metabolism</keyword>
<keyword id="KW-0808">Transferase</keyword>
<keyword id="KW-0812">Transmembrane</keyword>
<keyword id="KW-1133">Transmembrane helix</keyword>
<sequence length="356" mass="42231">MHHQWLLLAACFWVIFMFMVASKFITLTFKDPDVYSAKQEFLFLTTMPEVRKLPEEKHIPEELKPTGKELPDSRLVQPLVYMERLELIRNVCRDDALKNLSHTPVSKFVLDRIFVCDKHKILFCQTPKVGNTQWKKVLIVLNGAFPSIEEIPENVVHDHEKNGLPRLSSFSDAEIQKRLKTYFKFFIVRDPFERLISAFKDKFVHNPRFEPWYRHEIAPGIIRKYRRNRTESRGIQFEDFVRYLGDPNHRWLDLQFGDHIIHWVTYVELCAPCEIMYSVIGHHETLEDDAPYILKEAGIDHLVSYPTIPPGITVYNRTKVEHYFLGISKRDIRRLYARFEGDFKLFGYQKPDFLLN</sequence>
<evidence type="ECO:0000250" key="1"/>
<evidence type="ECO:0000250" key="2">
    <source>
        <dbReference type="UniProtKB" id="O43529"/>
    </source>
</evidence>
<evidence type="ECO:0000250" key="3">
    <source>
        <dbReference type="UniProtKB" id="O54702"/>
    </source>
</evidence>
<evidence type="ECO:0000255" key="4"/>
<evidence type="ECO:0000305" key="5"/>
<comment type="function">
    <text evidence="2">Catalyzes the transfer of sulfate from 3'-phosphoadenylyl sulfate (PAPS) to position 3 of terminal glucuronic acid of both protein- and lipid-linked oligosaccharides. Participates in biosynthesis of HNK-1 carbohydrate structure 3-O-sulfo-beta-D-GlcA-(1-&gt;3)-beta-D-Gal-(1-&gt;4)-D-GlcNAc-R, a sulfated glucuronyl-lactosaminyl residue carried by many neural recognition molecules, which is involved in cell interactions during ontogenetic development and in synaptic plasticity in the adult. May be indirectly involved in synapse plasticity of the hippocampus, via its role in HNK-1 biosynthesis. Sulfates terminal glucuronyl residue of the laminin globular (LG)-domain binding epitope on DAG1/alpha-dystroglycan and prevents further polymerization by LARGE1 glycosyltransferase. Likely defines the chain length of LG epitope, conferring binding specificity to extracellular matrix components. Plays a role in down-regulating the steroid hormones. Sulfates glucuronidated estrogens and androgens with an impact in hormone cycle and fertility. Has a preference for glucuronyl moiety at the 3-hydroxyl group of a sterol ring rather than the 17-hydroxyl group, showing high catalytic efficiency for 17beta-estradiol 3-O-(beta-D-glucuronate) and dehydroepiandrosterone 3-O-(beta-D-glucuronate) hormones.</text>
</comment>
<comment type="catalytic activity">
    <reaction evidence="2">
        <text>3-O-{beta-D-GlcA-(1-&gt;[3)-alpha-D-Xyl-(1-&gt;3)-beta-D-GlcA-(1-&gt;](n)-4)-beta-D-Xyl-(1-&gt;4)-Rib-ol-P-Rib-ol-P-3-beta-D-GalNAc-(1-&gt;3)-beta-D-GlcNAc-(1-&gt;4)-O-6-P-alpha-D-Man}-L-Thr-[protein] + 3'-phosphoadenylyl sulfate = 3-O-{O-3-S-beta-D-GlcA-(1-&gt;[3)-alpha-D-Xyl-(1-&gt;3)-beta-D-GlcA-(1-&gt;](n)-4)-beta-D-Xyl-(1-&gt;4)-Rib-ol-P-Rib-ol-P-3-beta-D-GalNAc-(1-&gt;3)-beta-D-GlcNAc-(1-&gt;4)-O-6-P-alpha-D-Man}-L-Thr-[protein] + adenosine 3',5'-bisphosphate + H(+)</text>
        <dbReference type="Rhea" id="RHEA:68304"/>
        <dbReference type="Rhea" id="RHEA-COMP:17486"/>
        <dbReference type="Rhea" id="RHEA-COMP:17487"/>
        <dbReference type="ChEBI" id="CHEBI:15378"/>
        <dbReference type="ChEBI" id="CHEBI:58339"/>
        <dbReference type="ChEBI" id="CHEBI:58343"/>
        <dbReference type="ChEBI" id="CHEBI:177355"/>
        <dbReference type="ChEBI" id="CHEBI:177363"/>
    </reaction>
    <physiologicalReaction direction="left-to-right" evidence="2">
        <dbReference type="Rhea" id="RHEA:68305"/>
    </physiologicalReaction>
</comment>
<comment type="catalytic activity">
    <reaction evidence="2">
        <text>17beta-estradiol 3-O-(beta-D-glucuronate) + 3'-phosphoadenylyl sulfate = 17beta-estradiol 3-O-(3-sulfo-beta-D-glucuronate) + adenosine 3',5'-bisphosphate + H(+)</text>
        <dbReference type="Rhea" id="RHEA:68696"/>
        <dbReference type="ChEBI" id="CHEBI:15378"/>
        <dbReference type="ChEBI" id="CHEBI:58339"/>
        <dbReference type="ChEBI" id="CHEBI:58343"/>
        <dbReference type="ChEBI" id="CHEBI:136641"/>
        <dbReference type="ChEBI" id="CHEBI:178093"/>
    </reaction>
    <physiologicalReaction direction="left-to-right" evidence="2">
        <dbReference type="Rhea" id="RHEA:68697"/>
    </physiologicalReaction>
</comment>
<comment type="catalytic activity">
    <reaction evidence="2">
        <text>17beta-estradiol 3-O-(beta-D-glucuronate) 17-sulfate + 3'-phosphoadenylyl sulfate = 17beta-estradiol 3-O-(3-sulfo-beta-D-glucuronate) 17-sulfate + adenosine 3',5'-bisphosphate + H(+)</text>
        <dbReference type="Rhea" id="RHEA:68660"/>
        <dbReference type="ChEBI" id="CHEBI:15378"/>
        <dbReference type="ChEBI" id="CHEBI:58339"/>
        <dbReference type="ChEBI" id="CHEBI:58343"/>
        <dbReference type="ChEBI" id="CHEBI:178094"/>
        <dbReference type="ChEBI" id="CHEBI:178095"/>
    </reaction>
    <physiologicalReaction direction="left-to-right" evidence="2">
        <dbReference type="Rhea" id="RHEA:68661"/>
    </physiologicalReaction>
</comment>
<comment type="catalytic activity">
    <reaction evidence="2">
        <text>17beta-estradiol 17-O-(beta-D-glucuronate) + 3'-phosphoadenylyl sulfate = 17beta-estradiol 17-O-(3-sulfo-beta-D-glucuronate) + adenosine 3',5'-bisphosphate + H(+)</text>
        <dbReference type="Rhea" id="RHEA:68664"/>
        <dbReference type="ChEBI" id="CHEBI:15378"/>
        <dbReference type="ChEBI" id="CHEBI:58339"/>
        <dbReference type="ChEBI" id="CHEBI:58343"/>
        <dbReference type="ChEBI" id="CHEBI:82961"/>
        <dbReference type="ChEBI" id="CHEBI:178096"/>
    </reaction>
    <physiologicalReaction direction="left-to-right" evidence="2">
        <dbReference type="Rhea" id="RHEA:68665"/>
    </physiologicalReaction>
</comment>
<comment type="catalytic activity">
    <reaction evidence="2">
        <text>16alpha,17beta-estriol 3-O-(beta-D-glucuronate) + 3'-phosphoadenylyl sulfate = 16alpha,17beta-estriol 3-O-(3-sulfo-beta-D-glucuronate) + adenosine 3',5'-bisphosphate + H(+)</text>
        <dbReference type="Rhea" id="RHEA:68668"/>
        <dbReference type="ChEBI" id="CHEBI:15378"/>
        <dbReference type="ChEBI" id="CHEBI:58339"/>
        <dbReference type="ChEBI" id="CHEBI:58343"/>
        <dbReference type="ChEBI" id="CHEBI:136649"/>
        <dbReference type="ChEBI" id="CHEBI:178097"/>
    </reaction>
    <physiologicalReaction direction="left-to-right" evidence="2">
        <dbReference type="Rhea" id="RHEA:68669"/>
    </physiologicalReaction>
</comment>
<comment type="catalytic activity">
    <reaction evidence="2">
        <text>16alpha,17beta-estriol 16-O-(beta-D-glucuronate) + 3'-phosphoadenylyl sulfate = 16alpha,17beta-estriol 16-O-(3-sulfo-beta-D-glucuronate) + adenosine 3',5'-bisphosphate + H(+)</text>
        <dbReference type="Rhea" id="RHEA:68672"/>
        <dbReference type="ChEBI" id="CHEBI:15378"/>
        <dbReference type="ChEBI" id="CHEBI:58339"/>
        <dbReference type="ChEBI" id="CHEBI:58343"/>
        <dbReference type="ChEBI" id="CHEBI:136650"/>
        <dbReference type="ChEBI" id="CHEBI:178098"/>
    </reaction>
    <physiologicalReaction direction="left-to-right" evidence="2">
        <dbReference type="Rhea" id="RHEA:68673"/>
    </physiologicalReaction>
</comment>
<comment type="catalytic activity">
    <reaction evidence="2">
        <text>16alpha,17beta-estriol 17-O-(beta-D-glucuronate) + 3'-phosphoadenylyl sulfate = 16alpha,17beta-estriol 17-O-(3-sulfo-beta-D-glucuronate) + adenosine 3',5'-bisphosphate + H(+)</text>
        <dbReference type="Rhea" id="RHEA:68700"/>
        <dbReference type="ChEBI" id="CHEBI:15378"/>
        <dbReference type="ChEBI" id="CHEBI:58339"/>
        <dbReference type="ChEBI" id="CHEBI:58343"/>
        <dbReference type="ChEBI" id="CHEBI:178099"/>
        <dbReference type="ChEBI" id="CHEBI:178100"/>
    </reaction>
    <physiologicalReaction direction="left-to-right" evidence="2">
        <dbReference type="Rhea" id="RHEA:68701"/>
    </physiologicalReaction>
</comment>
<comment type="catalytic activity">
    <reaction evidence="2">
        <text>estrone 3-O-(beta-D-glucuronate) + 3'-phosphoadenylyl sulfate = estrone 3-O-(3-sulfo-beta-D-glucuronate) + adenosine 3',5'-bisphosphate + H(+)</text>
        <dbReference type="Rhea" id="RHEA:68676"/>
        <dbReference type="ChEBI" id="CHEBI:15378"/>
        <dbReference type="ChEBI" id="CHEBI:58339"/>
        <dbReference type="ChEBI" id="CHEBI:58343"/>
        <dbReference type="ChEBI" id="CHEBI:136634"/>
        <dbReference type="ChEBI" id="CHEBI:178101"/>
    </reaction>
    <physiologicalReaction direction="left-to-right" evidence="2">
        <dbReference type="Rhea" id="RHEA:68677"/>
    </physiologicalReaction>
</comment>
<comment type="catalytic activity">
    <reaction evidence="2">
        <text>3alpha,20alpha-dihydroxy-5beta-pregnane 3-O-(beta-D-glucuronate) + 3'-phosphoadenylyl sulfate = 3alpha,20alpha-dihydroxy-5beta-pregnane 3-O-(3-sulfo-beta-D-glucuronate) + adenosine 3',5'-bisphosphate + H(+)</text>
        <dbReference type="Rhea" id="RHEA:68680"/>
        <dbReference type="ChEBI" id="CHEBI:15378"/>
        <dbReference type="ChEBI" id="CHEBI:58339"/>
        <dbReference type="ChEBI" id="CHEBI:58343"/>
        <dbReference type="ChEBI" id="CHEBI:178102"/>
        <dbReference type="ChEBI" id="CHEBI:178103"/>
    </reaction>
    <physiologicalReaction direction="left-to-right" evidence="2">
        <dbReference type="Rhea" id="RHEA:68681"/>
    </physiologicalReaction>
</comment>
<comment type="catalytic activity">
    <reaction evidence="2">
        <text>testosterone 17-O-(beta-D-glucuronate) + 3'-phosphoadenylyl sulfate = testosterone 17-O-(3-sulfo-beta-D-glucuronate) + adenosine 3',5'-bisphosphate + H(+)</text>
        <dbReference type="Rhea" id="RHEA:68684"/>
        <dbReference type="ChEBI" id="CHEBI:15378"/>
        <dbReference type="ChEBI" id="CHEBI:58339"/>
        <dbReference type="ChEBI" id="CHEBI:58343"/>
        <dbReference type="ChEBI" id="CHEBI:136639"/>
        <dbReference type="ChEBI" id="CHEBI:178104"/>
    </reaction>
    <physiologicalReaction direction="left-to-right" evidence="2">
        <dbReference type="Rhea" id="RHEA:68685"/>
    </physiologicalReaction>
</comment>
<comment type="catalytic activity">
    <reaction evidence="2">
        <text>3beta-androst-5-en-17-one 3-O-(beta-D-glucuronate) + 3'-phosphoadenylyl sulfate = 3beta-androst-5-en-17-one 3-O-(3-sulfo-beta-D-glucuronate) + adenosine 3',5'-bisphosphate + H(+)</text>
        <dbReference type="Rhea" id="RHEA:68688"/>
        <dbReference type="ChEBI" id="CHEBI:15378"/>
        <dbReference type="ChEBI" id="CHEBI:58339"/>
        <dbReference type="ChEBI" id="CHEBI:58343"/>
        <dbReference type="ChEBI" id="CHEBI:178105"/>
        <dbReference type="ChEBI" id="CHEBI:178106"/>
    </reaction>
    <physiologicalReaction direction="left-to-right" evidence="2">
        <dbReference type="Rhea" id="RHEA:68689"/>
    </physiologicalReaction>
</comment>
<comment type="catalytic activity">
    <reaction evidence="2">
        <text>3alpha,17alpha-dihydroxy-5beta-androstane-11-one-17beta-carboxylate 3-O-(beta-D-glucuronate) + 3'-phosphoadenylyl sulfate = 3alpha,17alpha-dihydroxy-5beta-androstane-11-one-17beta-carboxylate 3-O-(3-sulfo-beta-D-glucuronate) + adenosine 3',5'-bisphosphate + H(+)</text>
        <dbReference type="Rhea" id="RHEA:68692"/>
        <dbReference type="ChEBI" id="CHEBI:15378"/>
        <dbReference type="ChEBI" id="CHEBI:58339"/>
        <dbReference type="ChEBI" id="CHEBI:58343"/>
        <dbReference type="ChEBI" id="CHEBI:178107"/>
        <dbReference type="ChEBI" id="CHEBI:178108"/>
    </reaction>
    <physiologicalReaction direction="left-to-right" evidence="2">
        <dbReference type="Rhea" id="RHEA:68693"/>
    </physiologicalReaction>
</comment>
<comment type="catalytic activity">
    <reaction evidence="2">
        <text>3alpha-hydroxyetiocholan-17-one 3-O-(beta-D-glucuronate) + 3'-phosphoadenylyl sulfate = 3alpha-hydroxyetiocholan-17-one 3-O-(3-sulfo-beta-D-glucuronate) + adenosine 3',5'-bisphosphate + H(+)</text>
        <dbReference type="Rhea" id="RHEA:68704"/>
        <dbReference type="ChEBI" id="CHEBI:15378"/>
        <dbReference type="ChEBI" id="CHEBI:58339"/>
        <dbReference type="ChEBI" id="CHEBI:58343"/>
        <dbReference type="ChEBI" id="CHEBI:178197"/>
        <dbReference type="ChEBI" id="CHEBI:178198"/>
    </reaction>
    <physiologicalReaction direction="left-to-right" evidence="2">
        <dbReference type="Rhea" id="RHEA:68705"/>
    </physiologicalReaction>
</comment>
<comment type="pathway">
    <text evidence="2">Steroid metabolism.</text>
</comment>
<comment type="pathway">
    <text evidence="2">Protein modification; carbohydrate sulfation.</text>
</comment>
<comment type="subcellular location">
    <subcellularLocation>
        <location evidence="3">Golgi apparatus membrane</location>
        <topology evidence="4">Single-pass type II membrane protein</topology>
    </subcellularLocation>
</comment>
<comment type="similarity">
    <text evidence="5">Belongs to the sulfotransferase 2 family.</text>
</comment>
<proteinExistence type="evidence at transcript level"/>
<gene>
    <name type="primary">CHST10</name>
</gene>
<organism>
    <name type="scientific">Pongo abelii</name>
    <name type="common">Sumatran orangutan</name>
    <name type="synonym">Pongo pygmaeus abelii</name>
    <dbReference type="NCBI Taxonomy" id="9601"/>
    <lineage>
        <taxon>Eukaryota</taxon>
        <taxon>Metazoa</taxon>
        <taxon>Chordata</taxon>
        <taxon>Craniata</taxon>
        <taxon>Vertebrata</taxon>
        <taxon>Euteleostomi</taxon>
        <taxon>Mammalia</taxon>
        <taxon>Eutheria</taxon>
        <taxon>Euarchontoglires</taxon>
        <taxon>Primates</taxon>
        <taxon>Haplorrhini</taxon>
        <taxon>Catarrhini</taxon>
        <taxon>Hominidae</taxon>
        <taxon>Pongo</taxon>
    </lineage>
</organism>
<protein>
    <recommendedName>
        <fullName>Carbohydrate sulfotransferase 10</fullName>
        <ecNumber evidence="2">2.8.2.-</ecNumber>
    </recommendedName>
    <alternativeName>
        <fullName>HNK-1 sulfotransferase</fullName>
        <shortName>HNK-1ST</shortName>
        <shortName>HNK1ST</shortName>
    </alternativeName>
</protein>
<accession>Q5RBZ6</accession>